<feature type="signal peptide" evidence="2">
    <location>
        <begin position="1"/>
        <end position="19"/>
    </location>
</feature>
<feature type="chain" id="PRO_5008180492" description="Berberine bridge enzyme-like 17">
    <location>
        <begin position="20"/>
        <end position="528"/>
    </location>
</feature>
<feature type="domain" description="FAD-binding PCMH-type" evidence="4">
    <location>
        <begin position="69"/>
        <end position="246"/>
    </location>
</feature>
<feature type="glycosylation site" description="N-linked (GlcNAc...) asparagine" evidence="3">
    <location>
        <position position="20"/>
    </location>
</feature>
<feature type="glycosylation site" description="N-linked (GlcNAc...) asparagine" evidence="3">
    <location>
        <position position="35"/>
    </location>
</feature>
<feature type="glycosylation site" description="N-linked (GlcNAc...) asparagine" evidence="3">
    <location>
        <position position="52"/>
    </location>
</feature>
<feature type="glycosylation site" description="N-linked (GlcNAc...) asparagine" evidence="3">
    <location>
        <position position="72"/>
    </location>
</feature>
<feature type="glycosylation site" description="N-linked (GlcNAc...) asparagine" evidence="3">
    <location>
        <position position="256"/>
    </location>
</feature>
<feature type="glycosylation site" description="N-linked (GlcNAc...) asparagine" evidence="3">
    <location>
        <position position="340"/>
    </location>
</feature>
<feature type="glycosylation site" description="N-linked (GlcNAc...) asparagine" evidence="3">
    <location>
        <position position="439"/>
    </location>
</feature>
<feature type="disulfide bond" evidence="1">
    <location>
        <begin position="32"/>
        <end position="94"/>
    </location>
</feature>
<feature type="cross-link" description="6-(S-cysteinyl)-8alpha-(pros-histidyl)-FAD (His-Cys)" evidence="1">
    <location>
        <begin position="109"/>
        <end position="171"/>
    </location>
</feature>
<name>BBE17_ARATH</name>
<accession>Q9SVG7</accession>
<comment type="cofactor">
    <cofactor evidence="1">
        <name>FAD</name>
        <dbReference type="ChEBI" id="CHEBI:57692"/>
    </cofactor>
    <text evidence="1">Binds 1 FAD per subunit in a bicovalent manner.</text>
</comment>
<comment type="subcellular location">
    <subcellularLocation>
        <location evidence="1">Secreted</location>
        <location evidence="1">Cell wall</location>
    </subcellularLocation>
</comment>
<comment type="PTM">
    <text evidence="1">The FAD cofactor is bound via a bicovalent 6-S-cysteinyl, 8alpha-N1-histidyl FAD linkage.</text>
</comment>
<comment type="similarity">
    <text evidence="6">Belongs to the oxygen-dependent FAD-linked oxidoreductase family.</text>
</comment>
<evidence type="ECO:0000250" key="1">
    <source>
        <dbReference type="UniProtKB" id="O64743"/>
    </source>
</evidence>
<evidence type="ECO:0000255" key="2"/>
<evidence type="ECO:0000255" key="3">
    <source>
        <dbReference type="PROSITE-ProRule" id="PRU00498"/>
    </source>
</evidence>
<evidence type="ECO:0000255" key="4">
    <source>
        <dbReference type="PROSITE-ProRule" id="PRU00718"/>
    </source>
</evidence>
<evidence type="ECO:0000303" key="5">
    <source>
    </source>
</evidence>
<evidence type="ECO:0000305" key="6"/>
<evidence type="ECO:0000312" key="7">
    <source>
        <dbReference type="Araport" id="AT4G20800"/>
    </source>
</evidence>
<evidence type="ECO:0000312" key="8">
    <source>
        <dbReference type="EMBL" id="CAB45846.1"/>
    </source>
</evidence>
<dbReference type="EC" id="1.1.1.-" evidence="1"/>
<dbReference type="EMBL" id="AL080254">
    <property type="protein sequence ID" value="CAB45846.1"/>
    <property type="molecule type" value="Genomic_DNA"/>
</dbReference>
<dbReference type="EMBL" id="AL161553">
    <property type="protein sequence ID" value="CAB79080.1"/>
    <property type="molecule type" value="Genomic_DNA"/>
</dbReference>
<dbReference type="EMBL" id="CP002687">
    <property type="protein sequence ID" value="AEE84362.1"/>
    <property type="molecule type" value="Genomic_DNA"/>
</dbReference>
<dbReference type="EMBL" id="BT006176">
    <property type="protein sequence ID" value="AAP04159.1"/>
    <property type="molecule type" value="mRNA"/>
</dbReference>
<dbReference type="EMBL" id="BT008552">
    <property type="protein sequence ID" value="AAP40379.1"/>
    <property type="molecule type" value="mRNA"/>
</dbReference>
<dbReference type="EMBL" id="AK228650">
    <property type="protein sequence ID" value="BAF00557.1"/>
    <property type="molecule type" value="mRNA"/>
</dbReference>
<dbReference type="PIR" id="T10622">
    <property type="entry name" value="T10622"/>
</dbReference>
<dbReference type="RefSeq" id="NP_193812.1">
    <property type="nucleotide sequence ID" value="NM_118198.2"/>
</dbReference>
<dbReference type="SMR" id="Q9SVG7"/>
<dbReference type="FunCoup" id="Q9SVG7">
    <property type="interactions" value="51"/>
</dbReference>
<dbReference type="STRING" id="3702.Q9SVG7"/>
<dbReference type="GlyGen" id="Q9SVG7">
    <property type="glycosylation" value="7 sites"/>
</dbReference>
<dbReference type="PaxDb" id="3702-AT4G20800.1"/>
<dbReference type="ProteomicsDB" id="241200"/>
<dbReference type="EnsemblPlants" id="AT4G20800.1">
    <property type="protein sequence ID" value="AT4G20800.1"/>
    <property type="gene ID" value="AT4G20800"/>
</dbReference>
<dbReference type="GeneID" id="827828"/>
<dbReference type="Gramene" id="AT4G20800.1">
    <property type="protein sequence ID" value="AT4G20800.1"/>
    <property type="gene ID" value="AT4G20800"/>
</dbReference>
<dbReference type="KEGG" id="ath:AT4G20800"/>
<dbReference type="Araport" id="AT4G20800"/>
<dbReference type="TAIR" id="AT4G20800">
    <property type="gene designation" value="ATBBE17"/>
</dbReference>
<dbReference type="eggNOG" id="ENOG502QVGN">
    <property type="taxonomic scope" value="Eukaryota"/>
</dbReference>
<dbReference type="HOGENOM" id="CLU_018354_6_0_1"/>
<dbReference type="InParanoid" id="Q9SVG7"/>
<dbReference type="OMA" id="AFRWRDC"/>
<dbReference type="PhylomeDB" id="Q9SVG7"/>
<dbReference type="BioCyc" id="ARA:AT4G20800-MONOMER"/>
<dbReference type="PRO" id="PR:Q9SVG7"/>
<dbReference type="Proteomes" id="UP000006548">
    <property type="component" value="Chromosome 4"/>
</dbReference>
<dbReference type="ExpressionAtlas" id="Q9SVG7">
    <property type="expression patterns" value="baseline and differential"/>
</dbReference>
<dbReference type="GO" id="GO:0005576">
    <property type="term" value="C:extracellular region"/>
    <property type="evidence" value="ECO:0007669"/>
    <property type="project" value="UniProtKB-KW"/>
</dbReference>
<dbReference type="GO" id="GO:0009505">
    <property type="term" value="C:plant-type cell wall"/>
    <property type="evidence" value="ECO:0000250"/>
    <property type="project" value="UniProtKB"/>
</dbReference>
<dbReference type="GO" id="GO:0071949">
    <property type="term" value="F:FAD binding"/>
    <property type="evidence" value="ECO:0007669"/>
    <property type="project" value="InterPro"/>
</dbReference>
<dbReference type="GO" id="GO:0016491">
    <property type="term" value="F:oxidoreductase activity"/>
    <property type="evidence" value="ECO:0007669"/>
    <property type="project" value="UniProtKB-KW"/>
</dbReference>
<dbReference type="FunFam" id="3.30.43.10:FF:000004">
    <property type="entry name" value="Berberine bridge enzyme-like 15"/>
    <property type="match status" value="1"/>
</dbReference>
<dbReference type="Gene3D" id="3.30.465.10">
    <property type="match status" value="1"/>
</dbReference>
<dbReference type="Gene3D" id="3.40.462.20">
    <property type="match status" value="1"/>
</dbReference>
<dbReference type="Gene3D" id="3.30.43.10">
    <property type="entry name" value="Uridine Diphospho-n-acetylenolpyruvylglucosamine Reductase, domain 2"/>
    <property type="match status" value="1"/>
</dbReference>
<dbReference type="InterPro" id="IPR012951">
    <property type="entry name" value="BBE"/>
</dbReference>
<dbReference type="InterPro" id="IPR016166">
    <property type="entry name" value="FAD-bd_PCMH"/>
</dbReference>
<dbReference type="InterPro" id="IPR036318">
    <property type="entry name" value="FAD-bd_PCMH-like_sf"/>
</dbReference>
<dbReference type="InterPro" id="IPR016167">
    <property type="entry name" value="FAD-bd_PCMH_sub1"/>
</dbReference>
<dbReference type="InterPro" id="IPR016169">
    <property type="entry name" value="FAD-bd_PCMH_sub2"/>
</dbReference>
<dbReference type="InterPro" id="IPR006094">
    <property type="entry name" value="Oxid_FAD_bind_N"/>
</dbReference>
<dbReference type="PANTHER" id="PTHR32448">
    <property type="entry name" value="OS08G0158400 PROTEIN"/>
    <property type="match status" value="1"/>
</dbReference>
<dbReference type="Pfam" id="PF08031">
    <property type="entry name" value="BBE"/>
    <property type="match status" value="1"/>
</dbReference>
<dbReference type="Pfam" id="PF01565">
    <property type="entry name" value="FAD_binding_4"/>
    <property type="match status" value="1"/>
</dbReference>
<dbReference type="SUPFAM" id="SSF56176">
    <property type="entry name" value="FAD-binding/transporter-associated domain-like"/>
    <property type="match status" value="1"/>
</dbReference>
<dbReference type="PROSITE" id="PS51387">
    <property type="entry name" value="FAD_PCMH"/>
    <property type="match status" value="1"/>
</dbReference>
<proteinExistence type="evidence at transcript level"/>
<organism>
    <name type="scientific">Arabidopsis thaliana</name>
    <name type="common">Mouse-ear cress</name>
    <dbReference type="NCBI Taxonomy" id="3702"/>
    <lineage>
        <taxon>Eukaryota</taxon>
        <taxon>Viridiplantae</taxon>
        <taxon>Streptophyta</taxon>
        <taxon>Embryophyta</taxon>
        <taxon>Tracheophyta</taxon>
        <taxon>Spermatophyta</taxon>
        <taxon>Magnoliopsida</taxon>
        <taxon>eudicotyledons</taxon>
        <taxon>Gunneridae</taxon>
        <taxon>Pentapetalae</taxon>
        <taxon>rosids</taxon>
        <taxon>malvids</taxon>
        <taxon>Brassicales</taxon>
        <taxon>Brassicaceae</taxon>
        <taxon>Camelineae</taxon>
        <taxon>Arabidopsis</taxon>
    </lineage>
</organism>
<sequence length="528" mass="58847">MKEVVYVLLLVLLVSVSDANETKPNIENFLRCLRNRTNPKNPIAEAIYTHENSTFASSYVSYTNNKRCLNPNDTKLIAIVAAKHESHVQATVVCAKSNGIQIRIRSGGHDYEGLSFTSSVPFVILDMHDLRSITIDVFRKQAWVDAGATMGELYTKIAAASKTLAFAGGVCPTLGAGGHISGGGYGNLIRKYGISVDHVVDARIVDVNGNILTGATLGRDLLWAIRGGGGASFGVILSWKINLVDVPKTVTVFKVNKTLEQGVTDVLYKWQLVSSKLPQDLFLRAMPKPVNGVVPSEKTIAVVFYAQFLGSARRLMAIMNKNLPELGLKREDCYEMSWINTTTFWQNYPVGTSTSVLLDRPSGPAGAFYKSKSDYVKKPIPKEEMEKIWKAMLKFNNMWMQWNPYGGVMDKIPADATAFPHRKGNLFKIQYFALWTDANATYANLGLMRDIYHEMEPYVSSNPREAFLNYRDIDVGSNPSGETNLEEAKIYGSKYFLGNFKRLMEVKAKYDPENFFRFEQSIPPASAM</sequence>
<keyword id="KW-0134">Cell wall</keyword>
<keyword id="KW-1015">Disulfide bond</keyword>
<keyword id="KW-0274">FAD</keyword>
<keyword id="KW-0285">Flavoprotein</keyword>
<keyword id="KW-0325">Glycoprotein</keyword>
<keyword id="KW-0547">Nucleotide-binding</keyword>
<keyword id="KW-0560">Oxidoreductase</keyword>
<keyword id="KW-1185">Reference proteome</keyword>
<keyword id="KW-0964">Secreted</keyword>
<keyword id="KW-0732">Signal</keyword>
<gene>
    <name evidence="7" type="ordered locus">At4g20800</name>
    <name evidence="8" type="ORF">F21C20.150</name>
</gene>
<protein>
    <recommendedName>
        <fullName evidence="5">Berberine bridge enzyme-like 17</fullName>
        <shortName evidence="5">AtBBE-like 17</shortName>
        <ecNumber evidence="1">1.1.1.-</ecNumber>
    </recommendedName>
</protein>
<reference key="1">
    <citation type="journal article" date="1999" name="Nature">
        <title>Sequence and analysis of chromosome 4 of the plant Arabidopsis thaliana.</title>
        <authorList>
            <person name="Mayer K.F.X."/>
            <person name="Schueller C."/>
            <person name="Wambutt R."/>
            <person name="Murphy G."/>
            <person name="Volckaert G."/>
            <person name="Pohl T."/>
            <person name="Duesterhoeft A."/>
            <person name="Stiekema W."/>
            <person name="Entian K.-D."/>
            <person name="Terryn N."/>
            <person name="Harris B."/>
            <person name="Ansorge W."/>
            <person name="Brandt P."/>
            <person name="Grivell L.A."/>
            <person name="Rieger M."/>
            <person name="Weichselgartner M."/>
            <person name="de Simone V."/>
            <person name="Obermaier B."/>
            <person name="Mache R."/>
            <person name="Mueller M."/>
            <person name="Kreis M."/>
            <person name="Delseny M."/>
            <person name="Puigdomenech P."/>
            <person name="Watson M."/>
            <person name="Schmidtheini T."/>
            <person name="Reichert B."/>
            <person name="Portetelle D."/>
            <person name="Perez-Alonso M."/>
            <person name="Boutry M."/>
            <person name="Bancroft I."/>
            <person name="Vos P."/>
            <person name="Hoheisel J."/>
            <person name="Zimmermann W."/>
            <person name="Wedler H."/>
            <person name="Ridley P."/>
            <person name="Langham S.-A."/>
            <person name="McCullagh B."/>
            <person name="Bilham L."/>
            <person name="Robben J."/>
            <person name="van der Schueren J."/>
            <person name="Grymonprez B."/>
            <person name="Chuang Y.-J."/>
            <person name="Vandenbussche F."/>
            <person name="Braeken M."/>
            <person name="Weltjens I."/>
            <person name="Voet M."/>
            <person name="Bastiaens I."/>
            <person name="Aert R."/>
            <person name="Defoor E."/>
            <person name="Weitzenegger T."/>
            <person name="Bothe G."/>
            <person name="Ramsperger U."/>
            <person name="Hilbert H."/>
            <person name="Braun M."/>
            <person name="Holzer E."/>
            <person name="Brandt A."/>
            <person name="Peters S."/>
            <person name="van Staveren M."/>
            <person name="Dirkse W."/>
            <person name="Mooijman P."/>
            <person name="Klein Lankhorst R."/>
            <person name="Rose M."/>
            <person name="Hauf J."/>
            <person name="Koetter P."/>
            <person name="Berneiser S."/>
            <person name="Hempel S."/>
            <person name="Feldpausch M."/>
            <person name="Lamberth S."/>
            <person name="Van den Daele H."/>
            <person name="De Keyser A."/>
            <person name="Buysshaert C."/>
            <person name="Gielen J."/>
            <person name="Villarroel R."/>
            <person name="De Clercq R."/>
            <person name="van Montagu M."/>
            <person name="Rogers J."/>
            <person name="Cronin A."/>
            <person name="Quail M.A."/>
            <person name="Bray-Allen S."/>
            <person name="Clark L."/>
            <person name="Doggett J."/>
            <person name="Hall S."/>
            <person name="Kay M."/>
            <person name="Lennard N."/>
            <person name="McLay K."/>
            <person name="Mayes R."/>
            <person name="Pettett A."/>
            <person name="Rajandream M.A."/>
            <person name="Lyne M."/>
            <person name="Benes V."/>
            <person name="Rechmann S."/>
            <person name="Borkova D."/>
            <person name="Bloecker H."/>
            <person name="Scharfe M."/>
            <person name="Grimm M."/>
            <person name="Loehnert T.-H."/>
            <person name="Dose S."/>
            <person name="de Haan M."/>
            <person name="Maarse A.C."/>
            <person name="Schaefer M."/>
            <person name="Mueller-Auer S."/>
            <person name="Gabel C."/>
            <person name="Fuchs M."/>
            <person name="Fartmann B."/>
            <person name="Granderath K."/>
            <person name="Dauner D."/>
            <person name="Herzl A."/>
            <person name="Neumann S."/>
            <person name="Argiriou A."/>
            <person name="Vitale D."/>
            <person name="Liguori R."/>
            <person name="Piravandi E."/>
            <person name="Massenet O."/>
            <person name="Quigley F."/>
            <person name="Clabauld G."/>
            <person name="Muendlein A."/>
            <person name="Felber R."/>
            <person name="Schnabl S."/>
            <person name="Hiller R."/>
            <person name="Schmidt W."/>
            <person name="Lecharny A."/>
            <person name="Aubourg S."/>
            <person name="Chefdor F."/>
            <person name="Cooke R."/>
            <person name="Berger C."/>
            <person name="Monfort A."/>
            <person name="Casacuberta E."/>
            <person name="Gibbons T."/>
            <person name="Weber N."/>
            <person name="Vandenbol M."/>
            <person name="Bargues M."/>
            <person name="Terol J."/>
            <person name="Torres A."/>
            <person name="Perez-Perez A."/>
            <person name="Purnelle B."/>
            <person name="Bent E."/>
            <person name="Johnson S."/>
            <person name="Tacon D."/>
            <person name="Jesse T."/>
            <person name="Heijnen L."/>
            <person name="Schwarz S."/>
            <person name="Scholler P."/>
            <person name="Heber S."/>
            <person name="Francs P."/>
            <person name="Bielke C."/>
            <person name="Frishman D."/>
            <person name="Haase D."/>
            <person name="Lemcke K."/>
            <person name="Mewes H.-W."/>
            <person name="Stocker S."/>
            <person name="Zaccaria P."/>
            <person name="Bevan M."/>
            <person name="Wilson R.K."/>
            <person name="de la Bastide M."/>
            <person name="Habermann K."/>
            <person name="Parnell L."/>
            <person name="Dedhia N."/>
            <person name="Gnoj L."/>
            <person name="Schutz K."/>
            <person name="Huang E."/>
            <person name="Spiegel L."/>
            <person name="Sekhon M."/>
            <person name="Murray J."/>
            <person name="Sheet P."/>
            <person name="Cordes M."/>
            <person name="Abu-Threideh J."/>
            <person name="Stoneking T."/>
            <person name="Kalicki J."/>
            <person name="Graves T."/>
            <person name="Harmon G."/>
            <person name="Edwards J."/>
            <person name="Latreille P."/>
            <person name="Courtney L."/>
            <person name="Cloud J."/>
            <person name="Abbott A."/>
            <person name="Scott K."/>
            <person name="Johnson D."/>
            <person name="Minx P."/>
            <person name="Bentley D."/>
            <person name="Fulton B."/>
            <person name="Miller N."/>
            <person name="Greco T."/>
            <person name="Kemp K."/>
            <person name="Kramer J."/>
            <person name="Fulton L."/>
            <person name="Mardis E."/>
            <person name="Dante M."/>
            <person name="Pepin K."/>
            <person name="Hillier L.W."/>
            <person name="Nelson J."/>
            <person name="Spieth J."/>
            <person name="Ryan E."/>
            <person name="Andrews S."/>
            <person name="Geisel C."/>
            <person name="Layman D."/>
            <person name="Du H."/>
            <person name="Ali J."/>
            <person name="Berghoff A."/>
            <person name="Jones K."/>
            <person name="Drone K."/>
            <person name="Cotton M."/>
            <person name="Joshu C."/>
            <person name="Antonoiu B."/>
            <person name="Zidanic M."/>
            <person name="Strong C."/>
            <person name="Sun H."/>
            <person name="Lamar B."/>
            <person name="Yordan C."/>
            <person name="Ma P."/>
            <person name="Zhong J."/>
            <person name="Preston R."/>
            <person name="Vil D."/>
            <person name="Shekher M."/>
            <person name="Matero A."/>
            <person name="Shah R."/>
            <person name="Swaby I.K."/>
            <person name="O'Shaughnessy A."/>
            <person name="Rodriguez M."/>
            <person name="Hoffman J."/>
            <person name="Till S."/>
            <person name="Granat S."/>
            <person name="Shohdy N."/>
            <person name="Hasegawa A."/>
            <person name="Hameed A."/>
            <person name="Lodhi M."/>
            <person name="Johnson A."/>
            <person name="Chen E."/>
            <person name="Marra M.A."/>
            <person name="Martienssen R."/>
            <person name="McCombie W.R."/>
        </authorList>
    </citation>
    <scope>NUCLEOTIDE SEQUENCE [LARGE SCALE GENOMIC DNA]</scope>
    <source>
        <strain>cv. Columbia</strain>
    </source>
</reference>
<reference key="2">
    <citation type="journal article" date="2017" name="Plant J.">
        <title>Araport11: a complete reannotation of the Arabidopsis thaliana reference genome.</title>
        <authorList>
            <person name="Cheng C.Y."/>
            <person name="Krishnakumar V."/>
            <person name="Chan A.P."/>
            <person name="Thibaud-Nissen F."/>
            <person name="Schobel S."/>
            <person name="Town C.D."/>
        </authorList>
    </citation>
    <scope>GENOME REANNOTATION</scope>
    <source>
        <strain>cv. Columbia</strain>
    </source>
</reference>
<reference key="3">
    <citation type="journal article" date="2003" name="Science">
        <title>Empirical analysis of transcriptional activity in the Arabidopsis genome.</title>
        <authorList>
            <person name="Yamada K."/>
            <person name="Lim J."/>
            <person name="Dale J.M."/>
            <person name="Chen H."/>
            <person name="Shinn P."/>
            <person name="Palm C.J."/>
            <person name="Southwick A.M."/>
            <person name="Wu H.C."/>
            <person name="Kim C.J."/>
            <person name="Nguyen M."/>
            <person name="Pham P.K."/>
            <person name="Cheuk R.F."/>
            <person name="Karlin-Newmann G."/>
            <person name="Liu S.X."/>
            <person name="Lam B."/>
            <person name="Sakano H."/>
            <person name="Wu T."/>
            <person name="Yu G."/>
            <person name="Miranda M."/>
            <person name="Quach H.L."/>
            <person name="Tripp M."/>
            <person name="Chang C.H."/>
            <person name="Lee J.M."/>
            <person name="Toriumi M.J."/>
            <person name="Chan M.M."/>
            <person name="Tang C.C."/>
            <person name="Onodera C.S."/>
            <person name="Deng J.M."/>
            <person name="Akiyama K."/>
            <person name="Ansari Y."/>
            <person name="Arakawa T."/>
            <person name="Banh J."/>
            <person name="Banno F."/>
            <person name="Bowser L."/>
            <person name="Brooks S.Y."/>
            <person name="Carninci P."/>
            <person name="Chao Q."/>
            <person name="Choy N."/>
            <person name="Enju A."/>
            <person name="Goldsmith A.D."/>
            <person name="Gurjal M."/>
            <person name="Hansen N.F."/>
            <person name="Hayashizaki Y."/>
            <person name="Johnson-Hopson C."/>
            <person name="Hsuan V.W."/>
            <person name="Iida K."/>
            <person name="Karnes M."/>
            <person name="Khan S."/>
            <person name="Koesema E."/>
            <person name="Ishida J."/>
            <person name="Jiang P.X."/>
            <person name="Jones T."/>
            <person name="Kawai J."/>
            <person name="Kamiya A."/>
            <person name="Meyers C."/>
            <person name="Nakajima M."/>
            <person name="Narusaka M."/>
            <person name="Seki M."/>
            <person name="Sakurai T."/>
            <person name="Satou M."/>
            <person name="Tamse R."/>
            <person name="Vaysberg M."/>
            <person name="Wallender E.K."/>
            <person name="Wong C."/>
            <person name="Yamamura Y."/>
            <person name="Yuan S."/>
            <person name="Shinozaki K."/>
            <person name="Davis R.W."/>
            <person name="Theologis A."/>
            <person name="Ecker J.R."/>
        </authorList>
    </citation>
    <scope>NUCLEOTIDE SEQUENCE [LARGE SCALE MRNA]</scope>
    <source>
        <strain>cv. Columbia</strain>
    </source>
</reference>
<reference key="4">
    <citation type="submission" date="2006-07" db="EMBL/GenBank/DDBJ databases">
        <title>Large-scale analysis of RIKEN Arabidopsis full-length (RAFL) cDNAs.</title>
        <authorList>
            <person name="Totoki Y."/>
            <person name="Seki M."/>
            <person name="Ishida J."/>
            <person name="Nakajima M."/>
            <person name="Enju A."/>
            <person name="Kamiya A."/>
            <person name="Narusaka M."/>
            <person name="Shin-i T."/>
            <person name="Nakagawa M."/>
            <person name="Sakamoto N."/>
            <person name="Oishi K."/>
            <person name="Kohara Y."/>
            <person name="Kobayashi M."/>
            <person name="Toyoda A."/>
            <person name="Sakaki Y."/>
            <person name="Sakurai T."/>
            <person name="Iida K."/>
            <person name="Akiyama K."/>
            <person name="Satou M."/>
            <person name="Toyoda T."/>
            <person name="Konagaya A."/>
            <person name="Carninci P."/>
            <person name="Kawai J."/>
            <person name="Hayashizaki Y."/>
            <person name="Shinozaki K."/>
        </authorList>
    </citation>
    <scope>NUCLEOTIDE SEQUENCE [LARGE SCALE MRNA]</scope>
    <source>
        <strain>cv. Columbia</strain>
    </source>
</reference>
<reference key="5">
    <citation type="journal article" date="2015" name="J. Biol. Chem.">
        <title>Oxidation of monolignols by members of the berberine bridge enzyme family suggests a role in plant cell wall metabolism.</title>
        <authorList>
            <person name="Daniel B."/>
            <person name="Pavkov-Keller T."/>
            <person name="Steiner B."/>
            <person name="Dordic A."/>
            <person name="Gutmann A."/>
            <person name="Nidetzky B."/>
            <person name="Sensen C.W."/>
            <person name="van der Graaff E."/>
            <person name="Wallner S."/>
            <person name="Gruber K."/>
            <person name="Macheroux P."/>
        </authorList>
    </citation>
    <scope>GENE FAMILY</scope>
    <scope>NOMENCLATURE</scope>
</reference>